<feature type="chain" id="PRO_1000051882" description="Small ribosomal subunit protein uS13">
    <location>
        <begin position="1"/>
        <end position="122"/>
    </location>
</feature>
<feature type="region of interest" description="Disordered" evidence="2">
    <location>
        <begin position="97"/>
        <end position="122"/>
    </location>
</feature>
<gene>
    <name evidence="1" type="primary">rpsM</name>
    <name type="ordered locus">Oant_1978</name>
</gene>
<name>RS13_BRUA4</name>
<protein>
    <recommendedName>
        <fullName evidence="1">Small ribosomal subunit protein uS13</fullName>
    </recommendedName>
    <alternativeName>
        <fullName evidence="3">30S ribosomal protein S13</fullName>
    </alternativeName>
</protein>
<keyword id="KW-1185">Reference proteome</keyword>
<keyword id="KW-0687">Ribonucleoprotein</keyword>
<keyword id="KW-0689">Ribosomal protein</keyword>
<keyword id="KW-0694">RNA-binding</keyword>
<keyword id="KW-0699">rRNA-binding</keyword>
<keyword id="KW-0820">tRNA-binding</keyword>
<dbReference type="EMBL" id="CP000758">
    <property type="protein sequence ID" value="ABS14694.1"/>
    <property type="molecule type" value="Genomic_DNA"/>
</dbReference>
<dbReference type="RefSeq" id="WP_006467002.1">
    <property type="nucleotide sequence ID" value="NC_009667.1"/>
</dbReference>
<dbReference type="SMR" id="A6X0E0"/>
<dbReference type="STRING" id="439375.Oant_1978"/>
<dbReference type="GeneID" id="61317564"/>
<dbReference type="KEGG" id="oan:Oant_1978"/>
<dbReference type="eggNOG" id="COG0099">
    <property type="taxonomic scope" value="Bacteria"/>
</dbReference>
<dbReference type="HOGENOM" id="CLU_103849_1_2_5"/>
<dbReference type="PhylomeDB" id="A6X0E0"/>
<dbReference type="Proteomes" id="UP000002301">
    <property type="component" value="Chromosome 1"/>
</dbReference>
<dbReference type="GO" id="GO:0005829">
    <property type="term" value="C:cytosol"/>
    <property type="evidence" value="ECO:0007669"/>
    <property type="project" value="TreeGrafter"/>
</dbReference>
<dbReference type="GO" id="GO:0015935">
    <property type="term" value="C:small ribosomal subunit"/>
    <property type="evidence" value="ECO:0007669"/>
    <property type="project" value="TreeGrafter"/>
</dbReference>
<dbReference type="GO" id="GO:0019843">
    <property type="term" value="F:rRNA binding"/>
    <property type="evidence" value="ECO:0007669"/>
    <property type="project" value="UniProtKB-UniRule"/>
</dbReference>
<dbReference type="GO" id="GO:0003735">
    <property type="term" value="F:structural constituent of ribosome"/>
    <property type="evidence" value="ECO:0007669"/>
    <property type="project" value="InterPro"/>
</dbReference>
<dbReference type="GO" id="GO:0000049">
    <property type="term" value="F:tRNA binding"/>
    <property type="evidence" value="ECO:0007669"/>
    <property type="project" value="UniProtKB-UniRule"/>
</dbReference>
<dbReference type="GO" id="GO:0006412">
    <property type="term" value="P:translation"/>
    <property type="evidence" value="ECO:0007669"/>
    <property type="project" value="UniProtKB-UniRule"/>
</dbReference>
<dbReference type="FunFam" id="1.10.8.50:FF:000001">
    <property type="entry name" value="30S ribosomal protein S13"/>
    <property type="match status" value="1"/>
</dbReference>
<dbReference type="FunFam" id="4.10.910.10:FF:000001">
    <property type="entry name" value="30S ribosomal protein S13"/>
    <property type="match status" value="1"/>
</dbReference>
<dbReference type="Gene3D" id="1.10.8.50">
    <property type="match status" value="1"/>
</dbReference>
<dbReference type="Gene3D" id="4.10.910.10">
    <property type="entry name" value="30s ribosomal protein s13, domain 2"/>
    <property type="match status" value="1"/>
</dbReference>
<dbReference type="HAMAP" id="MF_01315">
    <property type="entry name" value="Ribosomal_uS13"/>
    <property type="match status" value="1"/>
</dbReference>
<dbReference type="InterPro" id="IPR027437">
    <property type="entry name" value="Rbsml_uS13_C"/>
</dbReference>
<dbReference type="InterPro" id="IPR001892">
    <property type="entry name" value="Ribosomal_uS13"/>
</dbReference>
<dbReference type="InterPro" id="IPR010979">
    <property type="entry name" value="Ribosomal_uS13-like_H2TH"/>
</dbReference>
<dbReference type="InterPro" id="IPR019980">
    <property type="entry name" value="Ribosomal_uS13_bac-type"/>
</dbReference>
<dbReference type="InterPro" id="IPR018269">
    <property type="entry name" value="Ribosomal_uS13_CS"/>
</dbReference>
<dbReference type="NCBIfam" id="TIGR03631">
    <property type="entry name" value="uS13_bact"/>
    <property type="match status" value="1"/>
</dbReference>
<dbReference type="PANTHER" id="PTHR10871">
    <property type="entry name" value="30S RIBOSOMAL PROTEIN S13/40S RIBOSOMAL PROTEIN S18"/>
    <property type="match status" value="1"/>
</dbReference>
<dbReference type="PANTHER" id="PTHR10871:SF1">
    <property type="entry name" value="SMALL RIBOSOMAL SUBUNIT PROTEIN US13M"/>
    <property type="match status" value="1"/>
</dbReference>
<dbReference type="Pfam" id="PF00416">
    <property type="entry name" value="Ribosomal_S13"/>
    <property type="match status" value="1"/>
</dbReference>
<dbReference type="PIRSF" id="PIRSF002134">
    <property type="entry name" value="Ribosomal_S13"/>
    <property type="match status" value="1"/>
</dbReference>
<dbReference type="SUPFAM" id="SSF46946">
    <property type="entry name" value="S13-like H2TH domain"/>
    <property type="match status" value="1"/>
</dbReference>
<dbReference type="PROSITE" id="PS00646">
    <property type="entry name" value="RIBOSOMAL_S13_1"/>
    <property type="match status" value="1"/>
</dbReference>
<dbReference type="PROSITE" id="PS50159">
    <property type="entry name" value="RIBOSOMAL_S13_2"/>
    <property type="match status" value="1"/>
</dbReference>
<accession>A6X0E0</accession>
<evidence type="ECO:0000255" key="1">
    <source>
        <dbReference type="HAMAP-Rule" id="MF_01315"/>
    </source>
</evidence>
<evidence type="ECO:0000256" key="2">
    <source>
        <dbReference type="SAM" id="MobiDB-lite"/>
    </source>
</evidence>
<evidence type="ECO:0000305" key="3"/>
<comment type="function">
    <text evidence="1">Located at the top of the head of the 30S subunit, it contacts several helices of the 16S rRNA. In the 70S ribosome it contacts the 23S rRNA (bridge B1a) and protein L5 of the 50S subunit (bridge B1b), connecting the 2 subunits; these bridges are implicated in subunit movement. Contacts the tRNAs in the A and P-sites.</text>
</comment>
<comment type="subunit">
    <text evidence="1">Part of the 30S ribosomal subunit. Forms a loose heterodimer with protein S19. Forms two bridges to the 50S subunit in the 70S ribosome.</text>
</comment>
<comment type="similarity">
    <text evidence="1">Belongs to the universal ribosomal protein uS13 family.</text>
</comment>
<organism>
    <name type="scientific">Brucella anthropi (strain ATCC 49188 / DSM 6882 / CCUG 24695 / JCM 21032 / LMG 3331 / NBRC 15819 / NCTC 12168 / Alc 37)</name>
    <name type="common">Ochrobactrum anthropi</name>
    <dbReference type="NCBI Taxonomy" id="439375"/>
    <lineage>
        <taxon>Bacteria</taxon>
        <taxon>Pseudomonadati</taxon>
        <taxon>Pseudomonadota</taxon>
        <taxon>Alphaproteobacteria</taxon>
        <taxon>Hyphomicrobiales</taxon>
        <taxon>Brucellaceae</taxon>
        <taxon>Brucella/Ochrobactrum group</taxon>
        <taxon>Brucella</taxon>
    </lineage>
</organism>
<sequence length="122" mass="13754">MARIAGVNIPTNKRVVIALQYIHGIGPKFAREIVTKVGIADDRRVNQLSDAEVLQIREAIDADYQVEGDLRREVSMNIKRLMDLGCYRGLRHRRSLPVRGQRTHTNARTRKGPAKAIAGKKK</sequence>
<proteinExistence type="inferred from homology"/>
<reference key="1">
    <citation type="journal article" date="2011" name="J. Bacteriol.">
        <title>Genome of Ochrobactrum anthropi ATCC 49188 T, a versatile opportunistic pathogen and symbiont of several eukaryotic hosts.</title>
        <authorList>
            <person name="Chain P.S."/>
            <person name="Lang D.M."/>
            <person name="Comerci D.J."/>
            <person name="Malfatti S.A."/>
            <person name="Vergez L.M."/>
            <person name="Shin M."/>
            <person name="Ugalde R.A."/>
            <person name="Garcia E."/>
            <person name="Tolmasky M.E."/>
        </authorList>
    </citation>
    <scope>NUCLEOTIDE SEQUENCE [LARGE SCALE GENOMIC DNA]</scope>
    <source>
        <strain>ATCC 49188 / DSM 6882 / CCUG 24695 / JCM 21032 / LMG 3331 / NBRC 15819 / NCTC 12168 / Alc 37</strain>
    </source>
</reference>